<gene>
    <name evidence="1" type="primary">ackA</name>
    <name type="ordered locus">BCE33L4381</name>
</gene>
<name>ACKA_BACCZ</name>
<comment type="function">
    <text evidence="1">Catalyzes the formation of acetyl phosphate from acetate and ATP. Can also catalyze the reverse reaction.</text>
</comment>
<comment type="catalytic activity">
    <reaction evidence="1">
        <text>acetate + ATP = acetyl phosphate + ADP</text>
        <dbReference type="Rhea" id="RHEA:11352"/>
        <dbReference type="ChEBI" id="CHEBI:22191"/>
        <dbReference type="ChEBI" id="CHEBI:30089"/>
        <dbReference type="ChEBI" id="CHEBI:30616"/>
        <dbReference type="ChEBI" id="CHEBI:456216"/>
        <dbReference type="EC" id="2.7.2.1"/>
    </reaction>
</comment>
<comment type="cofactor">
    <cofactor evidence="1">
        <name>Mg(2+)</name>
        <dbReference type="ChEBI" id="CHEBI:18420"/>
    </cofactor>
    <cofactor evidence="1">
        <name>Mn(2+)</name>
        <dbReference type="ChEBI" id="CHEBI:29035"/>
    </cofactor>
    <text evidence="1">Mg(2+). Can also accept Mn(2+).</text>
</comment>
<comment type="pathway">
    <text evidence="1">Metabolic intermediate biosynthesis; acetyl-CoA biosynthesis; acetyl-CoA from acetate: step 1/2.</text>
</comment>
<comment type="subunit">
    <text evidence="1">Homodimer.</text>
</comment>
<comment type="subcellular location">
    <subcellularLocation>
        <location evidence="1">Cytoplasm</location>
    </subcellularLocation>
</comment>
<comment type="similarity">
    <text evidence="1">Belongs to the acetokinase family.</text>
</comment>
<reference key="1">
    <citation type="journal article" date="2006" name="J. Bacteriol.">
        <title>Pathogenomic sequence analysis of Bacillus cereus and Bacillus thuringiensis isolates closely related to Bacillus anthracis.</title>
        <authorList>
            <person name="Han C.S."/>
            <person name="Xie G."/>
            <person name="Challacombe J.F."/>
            <person name="Altherr M.R."/>
            <person name="Bhotika S.S."/>
            <person name="Bruce D."/>
            <person name="Campbell C.S."/>
            <person name="Campbell M.L."/>
            <person name="Chen J."/>
            <person name="Chertkov O."/>
            <person name="Cleland C."/>
            <person name="Dimitrijevic M."/>
            <person name="Doggett N.A."/>
            <person name="Fawcett J.J."/>
            <person name="Glavina T."/>
            <person name="Goodwin L.A."/>
            <person name="Hill K.K."/>
            <person name="Hitchcock P."/>
            <person name="Jackson P.J."/>
            <person name="Keim P."/>
            <person name="Kewalramani A.R."/>
            <person name="Longmire J."/>
            <person name="Lucas S."/>
            <person name="Malfatti S."/>
            <person name="McMurry K."/>
            <person name="Meincke L.J."/>
            <person name="Misra M."/>
            <person name="Moseman B.L."/>
            <person name="Mundt M."/>
            <person name="Munk A.C."/>
            <person name="Okinaka R.T."/>
            <person name="Parson-Quintana B."/>
            <person name="Reilly L.P."/>
            <person name="Richardson P."/>
            <person name="Robinson D.L."/>
            <person name="Rubin E."/>
            <person name="Saunders E."/>
            <person name="Tapia R."/>
            <person name="Tesmer J.G."/>
            <person name="Thayer N."/>
            <person name="Thompson L.S."/>
            <person name="Tice H."/>
            <person name="Ticknor L.O."/>
            <person name="Wills P.L."/>
            <person name="Brettin T.S."/>
            <person name="Gilna P."/>
        </authorList>
    </citation>
    <scope>NUCLEOTIDE SEQUENCE [LARGE SCALE GENOMIC DNA]</scope>
    <source>
        <strain>ZK / E33L</strain>
    </source>
</reference>
<sequence length="397" mass="43232">MSKIIAINAGSSSLKFQLFEMPSETVLTKGLVERIGLEDSIFTITVDGEKQKEITNIPDHAVAVNMLLKKLTENGIVKSLDEIGGIGHRVVHGGEKFADSVLITDEVLADIEELSDLAPLHNPANVVGIKAFQEVLPNVPAVAVFDTAFHQTMPESAFLYSLPYEYYEKFGIRKYGFHGTSHKYVTERAAELLGRPLESLSLLSCHLGNGASIAAVEGGKSIDTSMGFTPLAGVTMGTRSGNIDPALIPYIMEKTGQTVEEVVNVLNKKSGMLGLTGYSSDLRDIIAKEEEGDHRAKVALDVFVSRIHKYIGSYTARMKGVDAIIFTAGVGENSAIIRERVLEGLEYMGVYFDAKRNNVFGEEAFINFPHSPVKIIVIPTDEEVMIARDVLRLGNIG</sequence>
<organism>
    <name type="scientific">Bacillus cereus (strain ZK / E33L)</name>
    <dbReference type="NCBI Taxonomy" id="288681"/>
    <lineage>
        <taxon>Bacteria</taxon>
        <taxon>Bacillati</taxon>
        <taxon>Bacillota</taxon>
        <taxon>Bacilli</taxon>
        <taxon>Bacillales</taxon>
        <taxon>Bacillaceae</taxon>
        <taxon>Bacillus</taxon>
        <taxon>Bacillus cereus group</taxon>
    </lineage>
</organism>
<feature type="chain" id="PRO_0000107528" description="Acetate kinase">
    <location>
        <begin position="1"/>
        <end position="397"/>
    </location>
</feature>
<feature type="active site" description="Proton donor/acceptor" evidence="1">
    <location>
        <position position="146"/>
    </location>
</feature>
<feature type="binding site" evidence="1">
    <location>
        <position position="8"/>
    </location>
    <ligand>
        <name>Mg(2+)</name>
        <dbReference type="ChEBI" id="CHEBI:18420"/>
    </ligand>
</feature>
<feature type="binding site" evidence="1">
    <location>
        <position position="15"/>
    </location>
    <ligand>
        <name>ATP</name>
        <dbReference type="ChEBI" id="CHEBI:30616"/>
    </ligand>
</feature>
<feature type="binding site" evidence="1">
    <location>
        <position position="89"/>
    </location>
    <ligand>
        <name>substrate</name>
    </ligand>
</feature>
<feature type="binding site" evidence="1">
    <location>
        <begin position="206"/>
        <end position="210"/>
    </location>
    <ligand>
        <name>ATP</name>
        <dbReference type="ChEBI" id="CHEBI:30616"/>
    </ligand>
</feature>
<feature type="binding site" evidence="1">
    <location>
        <begin position="281"/>
        <end position="283"/>
    </location>
    <ligand>
        <name>ATP</name>
        <dbReference type="ChEBI" id="CHEBI:30616"/>
    </ligand>
</feature>
<feature type="binding site" evidence="1">
    <location>
        <begin position="329"/>
        <end position="333"/>
    </location>
    <ligand>
        <name>ATP</name>
        <dbReference type="ChEBI" id="CHEBI:30616"/>
    </ligand>
</feature>
<feature type="binding site" evidence="1">
    <location>
        <position position="382"/>
    </location>
    <ligand>
        <name>Mg(2+)</name>
        <dbReference type="ChEBI" id="CHEBI:18420"/>
    </ligand>
</feature>
<feature type="site" description="Transition state stabilizer" evidence="1">
    <location>
        <position position="178"/>
    </location>
</feature>
<feature type="site" description="Transition state stabilizer" evidence="1">
    <location>
        <position position="239"/>
    </location>
</feature>
<keyword id="KW-0067">ATP-binding</keyword>
<keyword id="KW-0963">Cytoplasm</keyword>
<keyword id="KW-0418">Kinase</keyword>
<keyword id="KW-0460">Magnesium</keyword>
<keyword id="KW-0479">Metal-binding</keyword>
<keyword id="KW-0547">Nucleotide-binding</keyword>
<keyword id="KW-0808">Transferase</keyword>
<dbReference type="EC" id="2.7.2.1" evidence="1"/>
<dbReference type="EMBL" id="CP000001">
    <property type="protein sequence ID" value="AAU15889.1"/>
    <property type="molecule type" value="Genomic_DNA"/>
</dbReference>
<dbReference type="RefSeq" id="WP_000034576.1">
    <property type="nucleotide sequence ID" value="NZ_CP009968.1"/>
</dbReference>
<dbReference type="SMR" id="Q633F8"/>
<dbReference type="GeneID" id="75087804"/>
<dbReference type="KEGG" id="bcz:BCE33L4381"/>
<dbReference type="PATRIC" id="fig|288681.22.peg.990"/>
<dbReference type="UniPathway" id="UPA00340">
    <property type="reaction ID" value="UER00458"/>
</dbReference>
<dbReference type="Proteomes" id="UP000002612">
    <property type="component" value="Chromosome"/>
</dbReference>
<dbReference type="GO" id="GO:0005737">
    <property type="term" value="C:cytoplasm"/>
    <property type="evidence" value="ECO:0007669"/>
    <property type="project" value="UniProtKB-SubCell"/>
</dbReference>
<dbReference type="GO" id="GO:0008776">
    <property type="term" value="F:acetate kinase activity"/>
    <property type="evidence" value="ECO:0007669"/>
    <property type="project" value="UniProtKB-UniRule"/>
</dbReference>
<dbReference type="GO" id="GO:0005524">
    <property type="term" value="F:ATP binding"/>
    <property type="evidence" value="ECO:0007669"/>
    <property type="project" value="UniProtKB-KW"/>
</dbReference>
<dbReference type="GO" id="GO:0000287">
    <property type="term" value="F:magnesium ion binding"/>
    <property type="evidence" value="ECO:0007669"/>
    <property type="project" value="UniProtKB-UniRule"/>
</dbReference>
<dbReference type="GO" id="GO:0006083">
    <property type="term" value="P:acetate metabolic process"/>
    <property type="evidence" value="ECO:0007669"/>
    <property type="project" value="TreeGrafter"/>
</dbReference>
<dbReference type="GO" id="GO:0006085">
    <property type="term" value="P:acetyl-CoA biosynthetic process"/>
    <property type="evidence" value="ECO:0007669"/>
    <property type="project" value="UniProtKB-UniRule"/>
</dbReference>
<dbReference type="CDD" id="cd24010">
    <property type="entry name" value="ASKHA_NBD_AcK_PK"/>
    <property type="match status" value="1"/>
</dbReference>
<dbReference type="Gene3D" id="3.30.420.40">
    <property type="match status" value="2"/>
</dbReference>
<dbReference type="HAMAP" id="MF_00020">
    <property type="entry name" value="Acetate_kinase"/>
    <property type="match status" value="1"/>
</dbReference>
<dbReference type="InterPro" id="IPR004372">
    <property type="entry name" value="Ac/propionate_kinase"/>
</dbReference>
<dbReference type="InterPro" id="IPR000890">
    <property type="entry name" value="Aliphatic_acid_kin_short-chain"/>
</dbReference>
<dbReference type="InterPro" id="IPR023865">
    <property type="entry name" value="Aliphatic_acid_kinase_CS"/>
</dbReference>
<dbReference type="InterPro" id="IPR043129">
    <property type="entry name" value="ATPase_NBD"/>
</dbReference>
<dbReference type="NCBIfam" id="TIGR00016">
    <property type="entry name" value="ackA"/>
    <property type="match status" value="1"/>
</dbReference>
<dbReference type="PANTHER" id="PTHR21060">
    <property type="entry name" value="ACETATE KINASE"/>
    <property type="match status" value="1"/>
</dbReference>
<dbReference type="PANTHER" id="PTHR21060:SF15">
    <property type="entry name" value="ACETATE KINASE-RELATED"/>
    <property type="match status" value="1"/>
</dbReference>
<dbReference type="Pfam" id="PF00871">
    <property type="entry name" value="Acetate_kinase"/>
    <property type="match status" value="1"/>
</dbReference>
<dbReference type="PIRSF" id="PIRSF000722">
    <property type="entry name" value="Acetate_prop_kin"/>
    <property type="match status" value="1"/>
</dbReference>
<dbReference type="PRINTS" id="PR00471">
    <property type="entry name" value="ACETATEKNASE"/>
</dbReference>
<dbReference type="SUPFAM" id="SSF53067">
    <property type="entry name" value="Actin-like ATPase domain"/>
    <property type="match status" value="2"/>
</dbReference>
<dbReference type="PROSITE" id="PS01075">
    <property type="entry name" value="ACETATE_KINASE_1"/>
    <property type="match status" value="1"/>
</dbReference>
<dbReference type="PROSITE" id="PS01076">
    <property type="entry name" value="ACETATE_KINASE_2"/>
    <property type="match status" value="1"/>
</dbReference>
<accession>Q633F8</accession>
<proteinExistence type="inferred from homology"/>
<protein>
    <recommendedName>
        <fullName evidence="1">Acetate kinase</fullName>
        <ecNumber evidence="1">2.7.2.1</ecNumber>
    </recommendedName>
    <alternativeName>
        <fullName evidence="1">Acetokinase</fullName>
    </alternativeName>
</protein>
<evidence type="ECO:0000255" key="1">
    <source>
        <dbReference type="HAMAP-Rule" id="MF_00020"/>
    </source>
</evidence>